<name>CYB_SPEMA</name>
<comment type="function">
    <text evidence="2">Component of the ubiquinol-cytochrome c reductase complex (complex III or cytochrome b-c1 complex) that is part of the mitochondrial respiratory chain. The b-c1 complex mediates electron transfer from ubiquinol to cytochrome c. Contributes to the generation of a proton gradient across the mitochondrial membrane that is then used for ATP synthesis.</text>
</comment>
<comment type="cofactor">
    <cofactor evidence="2">
        <name>heme b</name>
        <dbReference type="ChEBI" id="CHEBI:60344"/>
    </cofactor>
    <text evidence="2">Binds 2 heme b groups non-covalently.</text>
</comment>
<comment type="subunit">
    <text evidence="2">The cytochrome bc1 complex contains 11 subunits: 3 respiratory subunits (MT-CYB, CYC1 and UQCRFS1), 2 core proteins (UQCRC1 and UQCRC2) and 6 low-molecular weight proteins (UQCRH/QCR6, UQCRB/QCR7, UQCRQ/QCR8, UQCR10/QCR9, UQCR11/QCR10 and a cleavage product of UQCRFS1). This cytochrome bc1 complex then forms a dimer.</text>
</comment>
<comment type="subcellular location">
    <subcellularLocation>
        <location evidence="2">Mitochondrion inner membrane</location>
        <topology evidence="2">Multi-pass membrane protein</topology>
    </subcellularLocation>
</comment>
<comment type="miscellaneous">
    <text evidence="1">Heme 1 (or BL or b562) is low-potential and absorbs at about 562 nm, and heme 2 (or BH or b566) is high-potential and absorbs at about 566 nm.</text>
</comment>
<comment type="similarity">
    <text evidence="3 4">Belongs to the cytochrome b family.</text>
</comment>
<comment type="caution">
    <text evidence="2">The full-length protein contains only eight transmembrane helices, not nine as predicted by bioinformatics tools.</text>
</comment>
<dbReference type="EMBL" id="AF157903">
    <property type="protein sequence ID" value="AAD50187.1"/>
    <property type="molecule type" value="Genomic_DNA"/>
</dbReference>
<dbReference type="GO" id="GO:0005743">
    <property type="term" value="C:mitochondrial inner membrane"/>
    <property type="evidence" value="ECO:0007669"/>
    <property type="project" value="UniProtKB-SubCell"/>
</dbReference>
<dbReference type="GO" id="GO:0045275">
    <property type="term" value="C:respiratory chain complex III"/>
    <property type="evidence" value="ECO:0007669"/>
    <property type="project" value="InterPro"/>
</dbReference>
<dbReference type="GO" id="GO:0046872">
    <property type="term" value="F:metal ion binding"/>
    <property type="evidence" value="ECO:0007669"/>
    <property type="project" value="UniProtKB-KW"/>
</dbReference>
<dbReference type="GO" id="GO:0008121">
    <property type="term" value="F:ubiquinol-cytochrome-c reductase activity"/>
    <property type="evidence" value="ECO:0007669"/>
    <property type="project" value="InterPro"/>
</dbReference>
<dbReference type="GO" id="GO:0006122">
    <property type="term" value="P:mitochondrial electron transport, ubiquinol to cytochrome c"/>
    <property type="evidence" value="ECO:0007669"/>
    <property type="project" value="TreeGrafter"/>
</dbReference>
<dbReference type="CDD" id="cd00290">
    <property type="entry name" value="cytochrome_b_C"/>
    <property type="match status" value="1"/>
</dbReference>
<dbReference type="CDD" id="cd00284">
    <property type="entry name" value="Cytochrome_b_N"/>
    <property type="match status" value="1"/>
</dbReference>
<dbReference type="FunFam" id="1.20.810.10:FF:000002">
    <property type="entry name" value="Cytochrome b"/>
    <property type="match status" value="1"/>
</dbReference>
<dbReference type="Gene3D" id="1.20.810.10">
    <property type="entry name" value="Cytochrome Bc1 Complex, Chain C"/>
    <property type="match status" value="1"/>
</dbReference>
<dbReference type="InterPro" id="IPR005798">
    <property type="entry name" value="Cyt_b/b6_C"/>
</dbReference>
<dbReference type="InterPro" id="IPR036150">
    <property type="entry name" value="Cyt_b/b6_C_sf"/>
</dbReference>
<dbReference type="InterPro" id="IPR005797">
    <property type="entry name" value="Cyt_b/b6_N"/>
</dbReference>
<dbReference type="InterPro" id="IPR027387">
    <property type="entry name" value="Cytb/b6-like_sf"/>
</dbReference>
<dbReference type="InterPro" id="IPR030689">
    <property type="entry name" value="Cytochrome_b"/>
</dbReference>
<dbReference type="InterPro" id="IPR048260">
    <property type="entry name" value="Cytochrome_b_C_euk/bac"/>
</dbReference>
<dbReference type="InterPro" id="IPR048259">
    <property type="entry name" value="Cytochrome_b_N_euk/bac"/>
</dbReference>
<dbReference type="InterPro" id="IPR016174">
    <property type="entry name" value="Di-haem_cyt_TM"/>
</dbReference>
<dbReference type="PANTHER" id="PTHR19271">
    <property type="entry name" value="CYTOCHROME B"/>
    <property type="match status" value="1"/>
</dbReference>
<dbReference type="PANTHER" id="PTHR19271:SF16">
    <property type="entry name" value="CYTOCHROME B"/>
    <property type="match status" value="1"/>
</dbReference>
<dbReference type="Pfam" id="PF00032">
    <property type="entry name" value="Cytochrom_B_C"/>
    <property type="match status" value="1"/>
</dbReference>
<dbReference type="Pfam" id="PF00033">
    <property type="entry name" value="Cytochrome_B"/>
    <property type="match status" value="1"/>
</dbReference>
<dbReference type="PIRSF" id="PIRSF038885">
    <property type="entry name" value="COB"/>
    <property type="match status" value="1"/>
</dbReference>
<dbReference type="SUPFAM" id="SSF81648">
    <property type="entry name" value="a domain/subunit of cytochrome bc1 complex (Ubiquinol-cytochrome c reductase)"/>
    <property type="match status" value="1"/>
</dbReference>
<dbReference type="SUPFAM" id="SSF81342">
    <property type="entry name" value="Transmembrane di-heme cytochromes"/>
    <property type="match status" value="1"/>
</dbReference>
<dbReference type="PROSITE" id="PS51003">
    <property type="entry name" value="CYTB_CTER"/>
    <property type="match status" value="1"/>
</dbReference>
<dbReference type="PROSITE" id="PS51002">
    <property type="entry name" value="CYTB_NTER"/>
    <property type="match status" value="1"/>
</dbReference>
<keyword id="KW-0249">Electron transport</keyword>
<keyword id="KW-0349">Heme</keyword>
<keyword id="KW-0408">Iron</keyword>
<keyword id="KW-0472">Membrane</keyword>
<keyword id="KW-0479">Metal-binding</keyword>
<keyword id="KW-0496">Mitochondrion</keyword>
<keyword id="KW-0999">Mitochondrion inner membrane</keyword>
<keyword id="KW-0679">Respiratory chain</keyword>
<keyword id="KW-0812">Transmembrane</keyword>
<keyword id="KW-1133">Transmembrane helix</keyword>
<keyword id="KW-0813">Transport</keyword>
<keyword id="KW-0830">Ubiquinone</keyword>
<accession>Q9TF49</accession>
<gene>
    <name type="primary">MT-CYB</name>
    <name type="synonym">COB</name>
    <name type="synonym">CYTB</name>
    <name type="synonym">MTCYB</name>
</gene>
<proteinExistence type="inferred from homology"/>
<geneLocation type="mitochondrion"/>
<reference key="1">
    <citation type="submission" date="1999-06" db="EMBL/GenBank/DDBJ databases">
        <title>A molecular phylogeny of ground squirrels and prairie dogs.</title>
        <authorList>
            <person name="Harrison R.G."/>
            <person name="Sherman P.W."/>
            <person name="Yensen E."/>
            <person name="Hoffmann R.S."/>
            <person name="Bogdanowicz S.M."/>
        </authorList>
    </citation>
    <scope>NUCLEOTIDE SEQUENCE [GENOMIC DNA]</scope>
    <source>
        <strain>Isolate S51</strain>
    </source>
</reference>
<sequence>MTNTRKTHPLIKIINHSFIDLPAPSNISAWWNFGSLLGLCLIIQILTGLFLAMHYTSDTMTAFSSVTHICRDVNYGWLIRYMHANGASMFFICLFLHVGRGMYYGSYTYFETWNIGVILLFAVMATAFMGYVLPWGQMSFWGATVITNLLSAIPYIGTTLVEWIWGGFSVDXATLTRFFAFHFILPFIIVALVMVHLLFLHETGSNNPSGLISDSDKIPFHPYYTIKDILGVLLLVLTLMALVLFSPDLLGDPDNYTPANPLSTPPHIKPEWYFLFAYAILRSIPNKLGGVLALVFSILILMLFPLLHLSKQRSMMFRPLSQCVFWILVADLFTLTWIGGQPVEHPFIIIGQLASILYFAIILLILPTVSMIENKLLKW</sequence>
<evidence type="ECO:0000250" key="1"/>
<evidence type="ECO:0000250" key="2">
    <source>
        <dbReference type="UniProtKB" id="P00157"/>
    </source>
</evidence>
<evidence type="ECO:0000255" key="3">
    <source>
        <dbReference type="PROSITE-ProRule" id="PRU00967"/>
    </source>
</evidence>
<evidence type="ECO:0000255" key="4">
    <source>
        <dbReference type="PROSITE-ProRule" id="PRU00968"/>
    </source>
</evidence>
<organism>
    <name type="scientific">Spermophilus major</name>
    <name type="common">Russet ground squirrel</name>
    <dbReference type="NCBI Taxonomy" id="99843"/>
    <lineage>
        <taxon>Eukaryota</taxon>
        <taxon>Metazoa</taxon>
        <taxon>Chordata</taxon>
        <taxon>Craniata</taxon>
        <taxon>Vertebrata</taxon>
        <taxon>Euteleostomi</taxon>
        <taxon>Mammalia</taxon>
        <taxon>Eutheria</taxon>
        <taxon>Euarchontoglires</taxon>
        <taxon>Glires</taxon>
        <taxon>Rodentia</taxon>
        <taxon>Sciuromorpha</taxon>
        <taxon>Sciuridae</taxon>
        <taxon>Xerinae</taxon>
        <taxon>Marmotini</taxon>
        <taxon>Spermophilus</taxon>
    </lineage>
</organism>
<feature type="chain" id="PRO_0000061596" description="Cytochrome b">
    <location>
        <begin position="1"/>
        <end position="379"/>
    </location>
</feature>
<feature type="transmembrane region" description="Helical" evidence="2">
    <location>
        <begin position="33"/>
        <end position="53"/>
    </location>
</feature>
<feature type="transmembrane region" description="Helical" evidence="2">
    <location>
        <begin position="77"/>
        <end position="98"/>
    </location>
</feature>
<feature type="transmembrane region" description="Helical" evidence="2">
    <location>
        <begin position="113"/>
        <end position="133"/>
    </location>
</feature>
<feature type="transmembrane region" description="Helical" evidence="2">
    <location>
        <begin position="178"/>
        <end position="198"/>
    </location>
</feature>
<feature type="transmembrane region" description="Helical" evidence="2">
    <location>
        <begin position="226"/>
        <end position="246"/>
    </location>
</feature>
<feature type="transmembrane region" description="Helical" evidence="2">
    <location>
        <begin position="288"/>
        <end position="308"/>
    </location>
</feature>
<feature type="transmembrane region" description="Helical" evidence="2">
    <location>
        <begin position="320"/>
        <end position="340"/>
    </location>
</feature>
<feature type="transmembrane region" description="Helical" evidence="2">
    <location>
        <begin position="347"/>
        <end position="367"/>
    </location>
</feature>
<feature type="binding site" description="axial binding residue" evidence="2">
    <location>
        <position position="83"/>
    </location>
    <ligand>
        <name>heme b</name>
        <dbReference type="ChEBI" id="CHEBI:60344"/>
        <label>b562</label>
    </ligand>
    <ligandPart>
        <name>Fe</name>
        <dbReference type="ChEBI" id="CHEBI:18248"/>
    </ligandPart>
</feature>
<feature type="binding site" description="axial binding residue" evidence="2">
    <location>
        <position position="97"/>
    </location>
    <ligand>
        <name>heme b</name>
        <dbReference type="ChEBI" id="CHEBI:60344"/>
        <label>b566</label>
    </ligand>
    <ligandPart>
        <name>Fe</name>
        <dbReference type="ChEBI" id="CHEBI:18248"/>
    </ligandPart>
</feature>
<feature type="binding site" description="axial binding residue" evidence="2">
    <location>
        <position position="182"/>
    </location>
    <ligand>
        <name>heme b</name>
        <dbReference type="ChEBI" id="CHEBI:60344"/>
        <label>b562</label>
    </ligand>
    <ligandPart>
        <name>Fe</name>
        <dbReference type="ChEBI" id="CHEBI:18248"/>
    </ligandPart>
</feature>
<feature type="binding site" description="axial binding residue" evidence="2">
    <location>
        <position position="196"/>
    </location>
    <ligand>
        <name>heme b</name>
        <dbReference type="ChEBI" id="CHEBI:60344"/>
        <label>b566</label>
    </ligand>
    <ligandPart>
        <name>Fe</name>
        <dbReference type="ChEBI" id="CHEBI:18248"/>
    </ligandPart>
</feature>
<feature type="binding site" evidence="2">
    <location>
        <position position="201"/>
    </location>
    <ligand>
        <name>a ubiquinone</name>
        <dbReference type="ChEBI" id="CHEBI:16389"/>
    </ligand>
</feature>
<protein>
    <recommendedName>
        <fullName>Cytochrome b</fullName>
    </recommendedName>
    <alternativeName>
        <fullName>Complex III subunit 3</fullName>
    </alternativeName>
    <alternativeName>
        <fullName>Complex III subunit III</fullName>
    </alternativeName>
    <alternativeName>
        <fullName>Cytochrome b-c1 complex subunit 3</fullName>
    </alternativeName>
    <alternativeName>
        <fullName>Ubiquinol-cytochrome-c reductase complex cytochrome b subunit</fullName>
    </alternativeName>
</protein>